<comment type="function">
    <text evidence="1">Required for disulfide bond formation in some periplasmic proteins. Acts by oxidizing the DsbA protein.</text>
</comment>
<comment type="subcellular location">
    <subcellularLocation>
        <location evidence="1">Cell inner membrane</location>
        <topology evidence="1">Multi-pass membrane protein</topology>
    </subcellularLocation>
</comment>
<comment type="similarity">
    <text evidence="1">Belongs to the DsbB family.</text>
</comment>
<organism>
    <name type="scientific">Burkholderia mallei (strain ATCC 23344)</name>
    <dbReference type="NCBI Taxonomy" id="243160"/>
    <lineage>
        <taxon>Bacteria</taxon>
        <taxon>Pseudomonadati</taxon>
        <taxon>Pseudomonadota</taxon>
        <taxon>Betaproteobacteria</taxon>
        <taxon>Burkholderiales</taxon>
        <taxon>Burkholderiaceae</taxon>
        <taxon>Burkholderia</taxon>
        <taxon>pseudomallei group</taxon>
    </lineage>
</organism>
<name>DSBB_BURMA</name>
<keyword id="KW-0997">Cell inner membrane</keyword>
<keyword id="KW-1003">Cell membrane</keyword>
<keyword id="KW-0143">Chaperone</keyword>
<keyword id="KW-1015">Disulfide bond</keyword>
<keyword id="KW-0249">Electron transport</keyword>
<keyword id="KW-0472">Membrane</keyword>
<keyword id="KW-0560">Oxidoreductase</keyword>
<keyword id="KW-0676">Redox-active center</keyword>
<keyword id="KW-1185">Reference proteome</keyword>
<keyword id="KW-0812">Transmembrane</keyword>
<keyword id="KW-1133">Transmembrane helix</keyword>
<keyword id="KW-0813">Transport</keyword>
<sequence>MNNLTLSLRRERRLLVLLALVCLALLAGALYLQYVKNEDPCPLCIIQRYFFVLIAVFAFIGAGMASGAGVAVTEALIVLSAAAGVGTAARHLYVQLNPGFSCGFDALQPVVDSLPPARWLPGVFKVAGLCETVYPPIFGILLPGWALIAFVLIAVPVAVSLLRHRGRLR</sequence>
<feature type="chain" id="PRO_0000298345" description="Disulfide bond formation protein B">
    <location>
        <begin position="1"/>
        <end position="169"/>
    </location>
</feature>
<feature type="topological domain" description="Cytoplasmic" evidence="1">
    <location>
        <begin position="1"/>
        <end position="14"/>
    </location>
</feature>
<feature type="transmembrane region" description="Helical" evidence="1">
    <location>
        <begin position="15"/>
        <end position="31"/>
    </location>
</feature>
<feature type="topological domain" description="Periplasmic" evidence="1">
    <location>
        <begin position="32"/>
        <end position="49"/>
    </location>
</feature>
<feature type="transmembrane region" description="Helical" evidence="1">
    <location>
        <begin position="50"/>
        <end position="64"/>
    </location>
</feature>
<feature type="topological domain" description="Cytoplasmic" evidence="1">
    <location>
        <begin position="65"/>
        <end position="71"/>
    </location>
</feature>
<feature type="transmembrane region" description="Helical" evidence="1">
    <location>
        <begin position="72"/>
        <end position="89"/>
    </location>
</feature>
<feature type="topological domain" description="Periplasmic" evidence="1">
    <location>
        <begin position="90"/>
        <end position="144"/>
    </location>
</feature>
<feature type="transmembrane region" description="Helical" evidence="1">
    <location>
        <begin position="145"/>
        <end position="163"/>
    </location>
</feature>
<feature type="topological domain" description="Cytoplasmic" evidence="1">
    <location>
        <begin position="164"/>
        <end position="169"/>
    </location>
</feature>
<feature type="disulfide bond" description="Redox-active" evidence="1">
    <location>
        <begin position="41"/>
        <end position="44"/>
    </location>
</feature>
<feature type="disulfide bond" description="Redox-active" evidence="1">
    <location>
        <begin position="102"/>
        <end position="130"/>
    </location>
</feature>
<reference key="1">
    <citation type="journal article" date="2004" name="Proc. Natl. Acad. Sci. U.S.A.">
        <title>Structural flexibility in the Burkholderia mallei genome.</title>
        <authorList>
            <person name="Nierman W.C."/>
            <person name="DeShazer D."/>
            <person name="Kim H.S."/>
            <person name="Tettelin H."/>
            <person name="Nelson K.E."/>
            <person name="Feldblyum T.V."/>
            <person name="Ulrich R.L."/>
            <person name="Ronning C.M."/>
            <person name="Brinkac L.M."/>
            <person name="Daugherty S.C."/>
            <person name="Davidsen T.D."/>
            <person name="DeBoy R.T."/>
            <person name="Dimitrov G."/>
            <person name="Dodson R.J."/>
            <person name="Durkin A.S."/>
            <person name="Gwinn M.L."/>
            <person name="Haft D.H."/>
            <person name="Khouri H.M."/>
            <person name="Kolonay J.F."/>
            <person name="Madupu R."/>
            <person name="Mohammoud Y."/>
            <person name="Nelson W.C."/>
            <person name="Radune D."/>
            <person name="Romero C.M."/>
            <person name="Sarria S."/>
            <person name="Selengut J."/>
            <person name="Shamblin C."/>
            <person name="Sullivan S.A."/>
            <person name="White O."/>
            <person name="Yu Y."/>
            <person name="Zafar N."/>
            <person name="Zhou L."/>
            <person name="Fraser C.M."/>
        </authorList>
    </citation>
    <scope>NUCLEOTIDE SEQUENCE [LARGE SCALE GENOMIC DNA]</scope>
    <source>
        <strain>ATCC 23344</strain>
    </source>
</reference>
<proteinExistence type="inferred from homology"/>
<gene>
    <name evidence="1" type="primary">dsbB</name>
    <name type="ordered locus">BMA0458</name>
</gene>
<protein>
    <recommendedName>
        <fullName evidence="1">Disulfide bond formation protein B</fullName>
    </recommendedName>
    <alternativeName>
        <fullName evidence="1">Disulfide oxidoreductase</fullName>
    </alternativeName>
</protein>
<accession>Q62M01</accession>
<dbReference type="EMBL" id="CP000010">
    <property type="protein sequence ID" value="AAU49204.1"/>
    <property type="molecule type" value="Genomic_DNA"/>
</dbReference>
<dbReference type="RefSeq" id="WP_004189653.1">
    <property type="nucleotide sequence ID" value="NC_006348.1"/>
</dbReference>
<dbReference type="RefSeq" id="YP_102267.1">
    <property type="nucleotide sequence ID" value="NC_006348.1"/>
</dbReference>
<dbReference type="SMR" id="Q62M01"/>
<dbReference type="KEGG" id="bma:BMA0458"/>
<dbReference type="PATRIC" id="fig|243160.12.peg.466"/>
<dbReference type="eggNOG" id="COG1495">
    <property type="taxonomic scope" value="Bacteria"/>
</dbReference>
<dbReference type="HOGENOM" id="CLU_098660_1_0_4"/>
<dbReference type="Proteomes" id="UP000006693">
    <property type="component" value="Chromosome 1"/>
</dbReference>
<dbReference type="GO" id="GO:0005886">
    <property type="term" value="C:plasma membrane"/>
    <property type="evidence" value="ECO:0007669"/>
    <property type="project" value="UniProtKB-SubCell"/>
</dbReference>
<dbReference type="GO" id="GO:0009055">
    <property type="term" value="F:electron transfer activity"/>
    <property type="evidence" value="ECO:0007669"/>
    <property type="project" value="UniProtKB-UniRule"/>
</dbReference>
<dbReference type="GO" id="GO:0015035">
    <property type="term" value="F:protein-disulfide reductase activity"/>
    <property type="evidence" value="ECO:0007669"/>
    <property type="project" value="UniProtKB-UniRule"/>
</dbReference>
<dbReference type="GO" id="GO:0006457">
    <property type="term" value="P:protein folding"/>
    <property type="evidence" value="ECO:0007669"/>
    <property type="project" value="InterPro"/>
</dbReference>
<dbReference type="Gene3D" id="1.20.1550.10">
    <property type="entry name" value="DsbB-like"/>
    <property type="match status" value="1"/>
</dbReference>
<dbReference type="HAMAP" id="MF_00286">
    <property type="entry name" value="DsbB"/>
    <property type="match status" value="1"/>
</dbReference>
<dbReference type="InterPro" id="IPR003752">
    <property type="entry name" value="DiS_bond_form_DsbB/BdbC"/>
</dbReference>
<dbReference type="InterPro" id="IPR022920">
    <property type="entry name" value="Disulphide_bond_form_DsbB"/>
</dbReference>
<dbReference type="InterPro" id="IPR050183">
    <property type="entry name" value="DsbB"/>
</dbReference>
<dbReference type="InterPro" id="IPR023380">
    <property type="entry name" value="DsbB-like_sf"/>
</dbReference>
<dbReference type="NCBIfam" id="NF002552">
    <property type="entry name" value="PRK02110.1"/>
    <property type="match status" value="1"/>
</dbReference>
<dbReference type="PANTHER" id="PTHR36570">
    <property type="entry name" value="DISULFIDE BOND FORMATION PROTEIN B"/>
    <property type="match status" value="1"/>
</dbReference>
<dbReference type="PANTHER" id="PTHR36570:SF3">
    <property type="entry name" value="DISULFIDE BOND FORMATION PROTEIN B"/>
    <property type="match status" value="1"/>
</dbReference>
<dbReference type="Pfam" id="PF02600">
    <property type="entry name" value="DsbB"/>
    <property type="match status" value="1"/>
</dbReference>
<dbReference type="SUPFAM" id="SSF158442">
    <property type="entry name" value="DsbB-like"/>
    <property type="match status" value="1"/>
</dbReference>
<evidence type="ECO:0000255" key="1">
    <source>
        <dbReference type="HAMAP-Rule" id="MF_00286"/>
    </source>
</evidence>